<comment type="function">
    <text evidence="1">Dual-specificity methyltransferase that catalyzes the formation of 5-methyluridine at position 54 (m5U54) in all tRNAs, and that of position 341 (m5U341) in tmRNA (transfer-mRNA).</text>
</comment>
<comment type="catalytic activity">
    <reaction evidence="1">
        <text>uridine(54) in tRNA + S-adenosyl-L-methionine = 5-methyluridine(54) in tRNA + S-adenosyl-L-homocysteine + H(+)</text>
        <dbReference type="Rhea" id="RHEA:42712"/>
        <dbReference type="Rhea" id="RHEA-COMP:10167"/>
        <dbReference type="Rhea" id="RHEA-COMP:10193"/>
        <dbReference type="ChEBI" id="CHEBI:15378"/>
        <dbReference type="ChEBI" id="CHEBI:57856"/>
        <dbReference type="ChEBI" id="CHEBI:59789"/>
        <dbReference type="ChEBI" id="CHEBI:65315"/>
        <dbReference type="ChEBI" id="CHEBI:74447"/>
        <dbReference type="EC" id="2.1.1.35"/>
    </reaction>
</comment>
<comment type="catalytic activity">
    <reaction evidence="1">
        <text>uridine(341) in tmRNA + S-adenosyl-L-methionine = 5-methyluridine(341) in tmRNA + S-adenosyl-L-homocysteine + H(+)</text>
        <dbReference type="Rhea" id="RHEA:43612"/>
        <dbReference type="Rhea" id="RHEA-COMP:10630"/>
        <dbReference type="Rhea" id="RHEA-COMP:10631"/>
        <dbReference type="ChEBI" id="CHEBI:15378"/>
        <dbReference type="ChEBI" id="CHEBI:57856"/>
        <dbReference type="ChEBI" id="CHEBI:59789"/>
        <dbReference type="ChEBI" id="CHEBI:65315"/>
        <dbReference type="ChEBI" id="CHEBI:74447"/>
    </reaction>
</comment>
<comment type="similarity">
    <text evidence="1">Belongs to the class I-like SAM-binding methyltransferase superfamily. RNA M5U methyltransferase family. TrmA subfamily.</text>
</comment>
<accession>Q8DD43</accession>
<evidence type="ECO:0000255" key="1">
    <source>
        <dbReference type="HAMAP-Rule" id="MF_01011"/>
    </source>
</evidence>
<sequence length="369" mass="43065">MATLDVNPQRYQQQLAEKVQRLTDMFAPYQAPELEVFESPDQHYRMRAEFRVWHEGEEMYYIMFNQETREKYRVDQFPAASRLINDLMPLLIDAMKDNESLRRKLFQVDFLSTLSGEILVSLLYHRQLDDAWIENAKALKQRLNDEGFNLNLIGRARKMKIVLDRDYVVEKLDVNGKPYTYQQVENSFTQPNGKVAEKMLEWAVDCTQESQGDLLELYCGNGNFSLALAQNFERVLATELAKPSVESAQYNIAANKIENVQIIRMSAEEFTEAMEGKREFRRLKDNGIDLKSYNCNTIFVDPPRSGMDVDTCKMVQGYERILYISCNPETLKENLDILSETHHITRFALFDQFPYTHHMEAGVMLERKA</sequence>
<name>TRMA_VIBVU</name>
<keyword id="KW-0489">Methyltransferase</keyword>
<keyword id="KW-0949">S-adenosyl-L-methionine</keyword>
<keyword id="KW-0808">Transferase</keyword>
<keyword id="KW-0819">tRNA processing</keyword>
<dbReference type="EC" id="2.1.1.-" evidence="1"/>
<dbReference type="EC" id="2.1.1.35" evidence="1"/>
<dbReference type="EMBL" id="AE016795">
    <property type="protein sequence ID" value="AAO09642.1"/>
    <property type="molecule type" value="Genomic_DNA"/>
</dbReference>
<dbReference type="RefSeq" id="WP_011079181.1">
    <property type="nucleotide sequence ID" value="NC_004459.3"/>
</dbReference>
<dbReference type="SMR" id="Q8DD43"/>
<dbReference type="KEGG" id="vvu:VV1_1171"/>
<dbReference type="HOGENOM" id="CLU_043022_0_0_6"/>
<dbReference type="Proteomes" id="UP000002275">
    <property type="component" value="Chromosome 1"/>
</dbReference>
<dbReference type="GO" id="GO:0005829">
    <property type="term" value="C:cytosol"/>
    <property type="evidence" value="ECO:0007669"/>
    <property type="project" value="TreeGrafter"/>
</dbReference>
<dbReference type="GO" id="GO:0019843">
    <property type="term" value="F:rRNA binding"/>
    <property type="evidence" value="ECO:0007669"/>
    <property type="project" value="TreeGrafter"/>
</dbReference>
<dbReference type="GO" id="GO:0030697">
    <property type="term" value="F:tRNA (uracil(54)-C5)-methyltransferase activity, S-adenosyl methionine-dependent"/>
    <property type="evidence" value="ECO:0007669"/>
    <property type="project" value="UniProtKB-UniRule"/>
</dbReference>
<dbReference type="GO" id="GO:0000049">
    <property type="term" value="F:tRNA binding"/>
    <property type="evidence" value="ECO:0007669"/>
    <property type="project" value="TreeGrafter"/>
</dbReference>
<dbReference type="GO" id="GO:0030488">
    <property type="term" value="P:tRNA methylation"/>
    <property type="evidence" value="ECO:0007669"/>
    <property type="project" value="UniProtKB-UniRule"/>
</dbReference>
<dbReference type="CDD" id="cd02440">
    <property type="entry name" value="AdoMet_MTases"/>
    <property type="match status" value="1"/>
</dbReference>
<dbReference type="FunFam" id="2.40.50.1070:FF:000001">
    <property type="entry name" value="tRNA/tmRNA (uracil-C(5))-methyltransferase"/>
    <property type="match status" value="1"/>
</dbReference>
<dbReference type="FunFam" id="3.40.50.150:FF:000012">
    <property type="entry name" value="tRNA/tmRNA (uracil-C(5))-methyltransferase"/>
    <property type="match status" value="1"/>
</dbReference>
<dbReference type="Gene3D" id="2.40.50.1070">
    <property type="match status" value="1"/>
</dbReference>
<dbReference type="Gene3D" id="3.40.50.150">
    <property type="entry name" value="Vaccinia Virus protein VP39"/>
    <property type="match status" value="1"/>
</dbReference>
<dbReference type="HAMAP" id="MF_01011">
    <property type="entry name" value="RNA_methyltr_TrmA"/>
    <property type="match status" value="1"/>
</dbReference>
<dbReference type="InterPro" id="IPR030390">
    <property type="entry name" value="MeTrfase_TrmA_AS"/>
</dbReference>
<dbReference type="InterPro" id="IPR030391">
    <property type="entry name" value="MeTrfase_TrmA_CS"/>
</dbReference>
<dbReference type="InterPro" id="IPR029063">
    <property type="entry name" value="SAM-dependent_MTases_sf"/>
</dbReference>
<dbReference type="InterPro" id="IPR011869">
    <property type="entry name" value="TrmA_MeTrfase"/>
</dbReference>
<dbReference type="InterPro" id="IPR010280">
    <property type="entry name" value="U5_MeTrfase_fam"/>
</dbReference>
<dbReference type="NCBIfam" id="TIGR02143">
    <property type="entry name" value="trmA_only"/>
    <property type="match status" value="1"/>
</dbReference>
<dbReference type="PANTHER" id="PTHR47790">
    <property type="entry name" value="TRNA/TMRNA (URACIL-C(5))-METHYLTRANSFERASE"/>
    <property type="match status" value="1"/>
</dbReference>
<dbReference type="PANTHER" id="PTHR47790:SF2">
    <property type="entry name" value="TRNA_TMRNA (URACIL-C(5))-METHYLTRANSFERASE"/>
    <property type="match status" value="1"/>
</dbReference>
<dbReference type="Pfam" id="PF05958">
    <property type="entry name" value="tRNA_U5-meth_tr"/>
    <property type="match status" value="1"/>
</dbReference>
<dbReference type="SUPFAM" id="SSF53335">
    <property type="entry name" value="S-adenosyl-L-methionine-dependent methyltransferases"/>
    <property type="match status" value="1"/>
</dbReference>
<dbReference type="PROSITE" id="PS51687">
    <property type="entry name" value="SAM_MT_RNA_M5U"/>
    <property type="match status" value="1"/>
</dbReference>
<dbReference type="PROSITE" id="PS01230">
    <property type="entry name" value="TRMA_1"/>
    <property type="match status" value="1"/>
</dbReference>
<dbReference type="PROSITE" id="PS01231">
    <property type="entry name" value="TRMA_2"/>
    <property type="match status" value="1"/>
</dbReference>
<reference key="1">
    <citation type="submission" date="2002-12" db="EMBL/GenBank/DDBJ databases">
        <title>Complete genome sequence of Vibrio vulnificus CMCP6.</title>
        <authorList>
            <person name="Rhee J.H."/>
            <person name="Kim S.Y."/>
            <person name="Chung S.S."/>
            <person name="Kim J.J."/>
            <person name="Moon Y.H."/>
            <person name="Jeong H."/>
            <person name="Choy H.E."/>
        </authorList>
    </citation>
    <scope>NUCLEOTIDE SEQUENCE [LARGE SCALE GENOMIC DNA]</scope>
    <source>
        <strain>CMCP6</strain>
    </source>
</reference>
<gene>
    <name evidence="1" type="primary">trmA</name>
    <name type="ordered locus">VV1_1171</name>
</gene>
<proteinExistence type="inferred from homology"/>
<feature type="chain" id="PRO_0000161882" description="tRNA/tmRNA (uracil-C(5))-methyltransferase">
    <location>
        <begin position="1"/>
        <end position="369"/>
    </location>
</feature>
<feature type="active site" description="Nucleophile" evidence="1">
    <location>
        <position position="326"/>
    </location>
</feature>
<feature type="active site" description="Proton acceptor" evidence="1">
    <location>
        <position position="360"/>
    </location>
</feature>
<feature type="binding site" evidence="1">
    <location>
        <position position="190"/>
    </location>
    <ligand>
        <name>S-adenosyl-L-methionine</name>
        <dbReference type="ChEBI" id="CHEBI:59789"/>
    </ligand>
</feature>
<feature type="binding site" evidence="1">
    <location>
        <position position="218"/>
    </location>
    <ligand>
        <name>S-adenosyl-L-methionine</name>
        <dbReference type="ChEBI" id="CHEBI:59789"/>
    </ligand>
</feature>
<feature type="binding site" evidence="1">
    <location>
        <position position="223"/>
    </location>
    <ligand>
        <name>S-adenosyl-L-methionine</name>
        <dbReference type="ChEBI" id="CHEBI:59789"/>
    </ligand>
</feature>
<feature type="binding site" evidence="1">
    <location>
        <position position="239"/>
    </location>
    <ligand>
        <name>S-adenosyl-L-methionine</name>
        <dbReference type="ChEBI" id="CHEBI:59789"/>
    </ligand>
</feature>
<feature type="binding site" evidence="1">
    <location>
        <position position="301"/>
    </location>
    <ligand>
        <name>S-adenosyl-L-methionine</name>
        <dbReference type="ChEBI" id="CHEBI:59789"/>
    </ligand>
</feature>
<organism>
    <name type="scientific">Vibrio vulnificus (strain CMCP6)</name>
    <dbReference type="NCBI Taxonomy" id="216895"/>
    <lineage>
        <taxon>Bacteria</taxon>
        <taxon>Pseudomonadati</taxon>
        <taxon>Pseudomonadota</taxon>
        <taxon>Gammaproteobacteria</taxon>
        <taxon>Vibrionales</taxon>
        <taxon>Vibrionaceae</taxon>
        <taxon>Vibrio</taxon>
    </lineage>
</organism>
<protein>
    <recommendedName>
        <fullName evidence="1">tRNA/tmRNA (uracil-C(5))-methyltransferase</fullName>
        <ecNumber evidence="1">2.1.1.-</ecNumber>
        <ecNumber evidence="1">2.1.1.35</ecNumber>
    </recommendedName>
    <alternativeName>
        <fullName evidence="1">tRNA (uracil(54)-C(5))-methyltransferase</fullName>
    </alternativeName>
    <alternativeName>
        <fullName evidence="1">tRNA(m5U54)-methyltransferase</fullName>
        <shortName evidence="1">RUMT</shortName>
    </alternativeName>
    <alternativeName>
        <fullName evidence="1">tmRNA (uracil(341)-C(5))-methyltransferase</fullName>
    </alternativeName>
</protein>